<feature type="chain" id="PRO_1000194254" description="Small ribosomal subunit protein bS20">
    <location>
        <begin position="1"/>
        <end position="86"/>
    </location>
</feature>
<feature type="region of interest" description="Disordered" evidence="2">
    <location>
        <begin position="1"/>
        <end position="25"/>
    </location>
</feature>
<protein>
    <recommendedName>
        <fullName evidence="1">Small ribosomal subunit protein bS20</fullName>
    </recommendedName>
    <alternativeName>
        <fullName evidence="3">30S ribosomal protein S20</fullName>
    </alternativeName>
</protein>
<proteinExistence type="inferred from homology"/>
<evidence type="ECO:0000255" key="1">
    <source>
        <dbReference type="HAMAP-Rule" id="MF_00500"/>
    </source>
</evidence>
<evidence type="ECO:0000256" key="2">
    <source>
        <dbReference type="SAM" id="MobiDB-lite"/>
    </source>
</evidence>
<evidence type="ECO:0000305" key="3"/>
<reference key="1">
    <citation type="journal article" date="2009" name="Vaccine">
        <title>Whole genome sequence analysis of Mycobacterium bovis bacillus Calmette-Guerin (BCG) Tokyo 172: a comparative study of BCG vaccine substrains.</title>
        <authorList>
            <person name="Seki M."/>
            <person name="Honda I."/>
            <person name="Fujita I."/>
            <person name="Yano I."/>
            <person name="Yamamoto S."/>
            <person name="Koyama A."/>
        </authorList>
    </citation>
    <scope>NUCLEOTIDE SEQUENCE [LARGE SCALE GENOMIC DNA]</scope>
    <source>
        <strain>BCG / Tokyo 172 / ATCC 35737 / TMC 1019</strain>
    </source>
</reference>
<name>RS20_MYCBT</name>
<accession>C1AQX7</accession>
<gene>
    <name evidence="1" type="primary">rpsT</name>
    <name type="ordered locus">JTY_2422</name>
</gene>
<keyword id="KW-0687">Ribonucleoprotein</keyword>
<keyword id="KW-0689">Ribosomal protein</keyword>
<keyword id="KW-0694">RNA-binding</keyword>
<keyword id="KW-0699">rRNA-binding</keyword>
<comment type="function">
    <text evidence="1">Binds directly to 16S ribosomal RNA.</text>
</comment>
<comment type="similarity">
    <text evidence="1">Belongs to the bacterial ribosomal protein bS20 family.</text>
</comment>
<sequence length="86" mass="9405">MANIKSQQKRNRTNERARLRNKAVKSSLRTAVRAFREAAHAGDKAKAAELLASTNRKLDKAASKGVIHKNQAANKKSALAQALNKL</sequence>
<dbReference type="EMBL" id="AP010918">
    <property type="protein sequence ID" value="BAH26706.1"/>
    <property type="molecule type" value="Genomic_DNA"/>
</dbReference>
<dbReference type="RefSeq" id="WP_003899314.1">
    <property type="nucleotide sequence ID" value="NZ_CP014566.1"/>
</dbReference>
<dbReference type="SMR" id="C1AQX7"/>
<dbReference type="KEGG" id="mbt:JTY_2422"/>
<dbReference type="HOGENOM" id="CLU_160655_0_1_11"/>
<dbReference type="GO" id="GO:0005829">
    <property type="term" value="C:cytosol"/>
    <property type="evidence" value="ECO:0007669"/>
    <property type="project" value="TreeGrafter"/>
</dbReference>
<dbReference type="GO" id="GO:0015935">
    <property type="term" value="C:small ribosomal subunit"/>
    <property type="evidence" value="ECO:0007669"/>
    <property type="project" value="TreeGrafter"/>
</dbReference>
<dbReference type="GO" id="GO:0070181">
    <property type="term" value="F:small ribosomal subunit rRNA binding"/>
    <property type="evidence" value="ECO:0007669"/>
    <property type="project" value="TreeGrafter"/>
</dbReference>
<dbReference type="GO" id="GO:0003735">
    <property type="term" value="F:structural constituent of ribosome"/>
    <property type="evidence" value="ECO:0007669"/>
    <property type="project" value="InterPro"/>
</dbReference>
<dbReference type="GO" id="GO:0006412">
    <property type="term" value="P:translation"/>
    <property type="evidence" value="ECO:0007669"/>
    <property type="project" value="UniProtKB-UniRule"/>
</dbReference>
<dbReference type="FunFam" id="1.20.58.110:FF:000001">
    <property type="entry name" value="30S ribosomal protein S20"/>
    <property type="match status" value="1"/>
</dbReference>
<dbReference type="Gene3D" id="1.20.58.110">
    <property type="entry name" value="Ribosomal protein S20"/>
    <property type="match status" value="1"/>
</dbReference>
<dbReference type="HAMAP" id="MF_00500">
    <property type="entry name" value="Ribosomal_bS20"/>
    <property type="match status" value="1"/>
</dbReference>
<dbReference type="InterPro" id="IPR002583">
    <property type="entry name" value="Ribosomal_bS20"/>
</dbReference>
<dbReference type="InterPro" id="IPR036510">
    <property type="entry name" value="Ribosomal_bS20_sf"/>
</dbReference>
<dbReference type="NCBIfam" id="TIGR00029">
    <property type="entry name" value="S20"/>
    <property type="match status" value="1"/>
</dbReference>
<dbReference type="PANTHER" id="PTHR33398">
    <property type="entry name" value="30S RIBOSOMAL PROTEIN S20"/>
    <property type="match status" value="1"/>
</dbReference>
<dbReference type="PANTHER" id="PTHR33398:SF1">
    <property type="entry name" value="SMALL RIBOSOMAL SUBUNIT PROTEIN BS20C"/>
    <property type="match status" value="1"/>
</dbReference>
<dbReference type="Pfam" id="PF01649">
    <property type="entry name" value="Ribosomal_S20p"/>
    <property type="match status" value="1"/>
</dbReference>
<dbReference type="SUPFAM" id="SSF46992">
    <property type="entry name" value="Ribosomal protein S20"/>
    <property type="match status" value="1"/>
</dbReference>
<organism>
    <name type="scientific">Mycobacterium bovis (strain BCG / Tokyo 172 / ATCC 35737 / TMC 1019)</name>
    <dbReference type="NCBI Taxonomy" id="561275"/>
    <lineage>
        <taxon>Bacteria</taxon>
        <taxon>Bacillati</taxon>
        <taxon>Actinomycetota</taxon>
        <taxon>Actinomycetes</taxon>
        <taxon>Mycobacteriales</taxon>
        <taxon>Mycobacteriaceae</taxon>
        <taxon>Mycobacterium</taxon>
        <taxon>Mycobacterium tuberculosis complex</taxon>
    </lineage>
</organism>